<gene>
    <name evidence="1" type="primary">coaX</name>
    <name type="ordered locus">BURPS1106A_0446</name>
</gene>
<evidence type="ECO:0000255" key="1">
    <source>
        <dbReference type="HAMAP-Rule" id="MF_01274"/>
    </source>
</evidence>
<proteinExistence type="inferred from homology"/>
<sequence length="256" mass="26802">MCLLIDAGNSRIKWALADTARHFVTSGAFEHASDAPDWSTLPAPRGAWISNVAGDAAAARIDALIEARWPALPRTVVRASAAQCGVTNGYAEPARLGSDRWAGLIGAHAAFADEHLLIATFGTATTLEALRADGHFAGGLIAPGWALMMRSLGMHTAQLPTVSIDAATNLLDELAENDAHAPFAIDTPHALSAGCLQAQAGLIERAWRDLEKAWQAPVRLVLSGGAADAIVRALTVPHTRHDTLVLTGLALIAHSA</sequence>
<protein>
    <recommendedName>
        <fullName evidence="1">Type III pantothenate kinase</fullName>
        <ecNumber evidence="1">2.7.1.33</ecNumber>
    </recommendedName>
    <alternativeName>
        <fullName evidence="1">PanK-III</fullName>
    </alternativeName>
    <alternativeName>
        <fullName evidence="1">Pantothenic acid kinase</fullName>
    </alternativeName>
</protein>
<reference key="1">
    <citation type="journal article" date="2010" name="Genome Biol. Evol.">
        <title>Continuing evolution of Burkholderia mallei through genome reduction and large-scale rearrangements.</title>
        <authorList>
            <person name="Losada L."/>
            <person name="Ronning C.M."/>
            <person name="DeShazer D."/>
            <person name="Woods D."/>
            <person name="Fedorova N."/>
            <person name="Kim H.S."/>
            <person name="Shabalina S.A."/>
            <person name="Pearson T.R."/>
            <person name="Brinkac L."/>
            <person name="Tan P."/>
            <person name="Nandi T."/>
            <person name="Crabtree J."/>
            <person name="Badger J."/>
            <person name="Beckstrom-Sternberg S."/>
            <person name="Saqib M."/>
            <person name="Schutzer S.E."/>
            <person name="Keim P."/>
            <person name="Nierman W.C."/>
        </authorList>
    </citation>
    <scope>NUCLEOTIDE SEQUENCE [LARGE SCALE GENOMIC DNA]</scope>
    <source>
        <strain>1106a</strain>
    </source>
</reference>
<dbReference type="EC" id="2.7.1.33" evidence="1"/>
<dbReference type="EMBL" id="CP000572">
    <property type="protein sequence ID" value="ABN92174.1"/>
    <property type="molecule type" value="Genomic_DNA"/>
</dbReference>
<dbReference type="SMR" id="A3NQV8"/>
<dbReference type="KEGG" id="bpl:BURPS1106A_0446"/>
<dbReference type="HOGENOM" id="CLU_066627_0_0_4"/>
<dbReference type="UniPathway" id="UPA00241">
    <property type="reaction ID" value="UER00352"/>
</dbReference>
<dbReference type="Proteomes" id="UP000006738">
    <property type="component" value="Chromosome I"/>
</dbReference>
<dbReference type="GO" id="GO:0005737">
    <property type="term" value="C:cytoplasm"/>
    <property type="evidence" value="ECO:0007669"/>
    <property type="project" value="UniProtKB-SubCell"/>
</dbReference>
<dbReference type="GO" id="GO:0005524">
    <property type="term" value="F:ATP binding"/>
    <property type="evidence" value="ECO:0007669"/>
    <property type="project" value="UniProtKB-UniRule"/>
</dbReference>
<dbReference type="GO" id="GO:0004594">
    <property type="term" value="F:pantothenate kinase activity"/>
    <property type="evidence" value="ECO:0007669"/>
    <property type="project" value="UniProtKB-UniRule"/>
</dbReference>
<dbReference type="GO" id="GO:0015937">
    <property type="term" value="P:coenzyme A biosynthetic process"/>
    <property type="evidence" value="ECO:0007669"/>
    <property type="project" value="UniProtKB-UniRule"/>
</dbReference>
<dbReference type="CDD" id="cd24015">
    <property type="entry name" value="ASKHA_NBD_PanK-III"/>
    <property type="match status" value="1"/>
</dbReference>
<dbReference type="Gene3D" id="3.30.420.40">
    <property type="match status" value="2"/>
</dbReference>
<dbReference type="HAMAP" id="MF_01274">
    <property type="entry name" value="Pantothen_kinase_3"/>
    <property type="match status" value="1"/>
</dbReference>
<dbReference type="InterPro" id="IPR043129">
    <property type="entry name" value="ATPase_NBD"/>
</dbReference>
<dbReference type="InterPro" id="IPR004619">
    <property type="entry name" value="Type_III_PanK"/>
</dbReference>
<dbReference type="NCBIfam" id="TIGR00671">
    <property type="entry name" value="baf"/>
    <property type="match status" value="1"/>
</dbReference>
<dbReference type="NCBIfam" id="NF009865">
    <property type="entry name" value="PRK13328.1-1"/>
    <property type="match status" value="1"/>
</dbReference>
<dbReference type="NCBIfam" id="NF009868">
    <property type="entry name" value="PRK13328.1-4"/>
    <property type="match status" value="1"/>
</dbReference>
<dbReference type="PANTHER" id="PTHR34265">
    <property type="entry name" value="TYPE III PANTOTHENATE KINASE"/>
    <property type="match status" value="1"/>
</dbReference>
<dbReference type="PANTHER" id="PTHR34265:SF1">
    <property type="entry name" value="TYPE III PANTOTHENATE KINASE"/>
    <property type="match status" value="1"/>
</dbReference>
<dbReference type="Pfam" id="PF03309">
    <property type="entry name" value="Pan_kinase"/>
    <property type="match status" value="1"/>
</dbReference>
<dbReference type="SUPFAM" id="SSF53067">
    <property type="entry name" value="Actin-like ATPase domain"/>
    <property type="match status" value="2"/>
</dbReference>
<name>COAX_BURP0</name>
<organism>
    <name type="scientific">Burkholderia pseudomallei (strain 1106a)</name>
    <dbReference type="NCBI Taxonomy" id="357348"/>
    <lineage>
        <taxon>Bacteria</taxon>
        <taxon>Pseudomonadati</taxon>
        <taxon>Pseudomonadota</taxon>
        <taxon>Betaproteobacteria</taxon>
        <taxon>Burkholderiales</taxon>
        <taxon>Burkholderiaceae</taxon>
        <taxon>Burkholderia</taxon>
        <taxon>pseudomallei group</taxon>
    </lineage>
</organism>
<feature type="chain" id="PRO_1000054365" description="Type III pantothenate kinase">
    <location>
        <begin position="1"/>
        <end position="256"/>
    </location>
</feature>
<feature type="active site" description="Proton acceptor" evidence="1">
    <location>
        <position position="99"/>
    </location>
</feature>
<feature type="binding site" evidence="1">
    <location>
        <begin position="6"/>
        <end position="13"/>
    </location>
    <ligand>
        <name>ATP</name>
        <dbReference type="ChEBI" id="CHEBI:30616"/>
    </ligand>
</feature>
<feature type="binding site" evidence="1">
    <location>
        <position position="90"/>
    </location>
    <ligand>
        <name>substrate</name>
    </ligand>
</feature>
<feature type="binding site" evidence="1">
    <location>
        <begin position="97"/>
        <end position="100"/>
    </location>
    <ligand>
        <name>substrate</name>
    </ligand>
</feature>
<feature type="binding site" evidence="1">
    <location>
        <position position="123"/>
    </location>
    <ligand>
        <name>ATP</name>
        <dbReference type="ChEBI" id="CHEBI:30616"/>
    </ligand>
</feature>
<feature type="binding site" evidence="1">
    <location>
        <position position="187"/>
    </location>
    <ligand>
        <name>substrate</name>
    </ligand>
</feature>
<keyword id="KW-0067">ATP-binding</keyword>
<keyword id="KW-0173">Coenzyme A biosynthesis</keyword>
<keyword id="KW-0963">Cytoplasm</keyword>
<keyword id="KW-0418">Kinase</keyword>
<keyword id="KW-0547">Nucleotide-binding</keyword>
<keyword id="KW-0630">Potassium</keyword>
<keyword id="KW-0808">Transferase</keyword>
<comment type="function">
    <text evidence="1">Catalyzes the phosphorylation of pantothenate (Pan), the first step in CoA biosynthesis.</text>
</comment>
<comment type="catalytic activity">
    <reaction evidence="1">
        <text>(R)-pantothenate + ATP = (R)-4'-phosphopantothenate + ADP + H(+)</text>
        <dbReference type="Rhea" id="RHEA:16373"/>
        <dbReference type="ChEBI" id="CHEBI:10986"/>
        <dbReference type="ChEBI" id="CHEBI:15378"/>
        <dbReference type="ChEBI" id="CHEBI:29032"/>
        <dbReference type="ChEBI" id="CHEBI:30616"/>
        <dbReference type="ChEBI" id="CHEBI:456216"/>
        <dbReference type="EC" id="2.7.1.33"/>
    </reaction>
</comment>
<comment type="cofactor">
    <cofactor evidence="1">
        <name>NH4(+)</name>
        <dbReference type="ChEBI" id="CHEBI:28938"/>
    </cofactor>
    <cofactor evidence="1">
        <name>K(+)</name>
        <dbReference type="ChEBI" id="CHEBI:29103"/>
    </cofactor>
    <text evidence="1">A monovalent cation. Ammonium or potassium.</text>
</comment>
<comment type="pathway">
    <text evidence="1">Cofactor biosynthesis; coenzyme A biosynthesis; CoA from (R)-pantothenate: step 1/5.</text>
</comment>
<comment type="subunit">
    <text evidence="1">Homodimer.</text>
</comment>
<comment type="subcellular location">
    <subcellularLocation>
        <location evidence="1">Cytoplasm</location>
    </subcellularLocation>
</comment>
<comment type="similarity">
    <text evidence="1">Belongs to the type III pantothenate kinase family.</text>
</comment>
<accession>A3NQV8</accession>